<evidence type="ECO:0000255" key="1">
    <source>
        <dbReference type="HAMAP-Rule" id="MF_00127"/>
    </source>
</evidence>
<comment type="catalytic activity">
    <reaction evidence="1">
        <text>tRNA(His) + L-histidine + ATP = L-histidyl-tRNA(His) + AMP + diphosphate + H(+)</text>
        <dbReference type="Rhea" id="RHEA:17313"/>
        <dbReference type="Rhea" id="RHEA-COMP:9665"/>
        <dbReference type="Rhea" id="RHEA-COMP:9689"/>
        <dbReference type="ChEBI" id="CHEBI:15378"/>
        <dbReference type="ChEBI" id="CHEBI:30616"/>
        <dbReference type="ChEBI" id="CHEBI:33019"/>
        <dbReference type="ChEBI" id="CHEBI:57595"/>
        <dbReference type="ChEBI" id="CHEBI:78442"/>
        <dbReference type="ChEBI" id="CHEBI:78527"/>
        <dbReference type="ChEBI" id="CHEBI:456215"/>
        <dbReference type="EC" id="6.1.1.21"/>
    </reaction>
</comment>
<comment type="subunit">
    <text evidence="1">Homodimer.</text>
</comment>
<comment type="subcellular location">
    <subcellularLocation>
        <location evidence="1">Cytoplasm</location>
    </subcellularLocation>
</comment>
<comment type="similarity">
    <text evidence="1">Belongs to the class-II aminoacyl-tRNA synthetase family.</text>
</comment>
<accession>A8H246</accession>
<proteinExistence type="inferred from homology"/>
<protein>
    <recommendedName>
        <fullName evidence="1">Histidine--tRNA ligase</fullName>
        <ecNumber evidence="1">6.1.1.21</ecNumber>
    </recommendedName>
    <alternativeName>
        <fullName evidence="1">Histidyl-tRNA synthetase</fullName>
        <shortName evidence="1">HisRS</shortName>
    </alternativeName>
</protein>
<dbReference type="EC" id="6.1.1.21" evidence="1"/>
<dbReference type="EMBL" id="CP000851">
    <property type="protein sequence ID" value="ABV86633.1"/>
    <property type="molecule type" value="Genomic_DNA"/>
</dbReference>
<dbReference type="RefSeq" id="WP_012154559.1">
    <property type="nucleotide sequence ID" value="NC_009901.1"/>
</dbReference>
<dbReference type="SMR" id="A8H246"/>
<dbReference type="STRING" id="398579.Spea_1306"/>
<dbReference type="KEGG" id="spl:Spea_1306"/>
<dbReference type="eggNOG" id="COG0124">
    <property type="taxonomic scope" value="Bacteria"/>
</dbReference>
<dbReference type="HOGENOM" id="CLU_025113_1_1_6"/>
<dbReference type="OrthoDB" id="9800814at2"/>
<dbReference type="Proteomes" id="UP000002608">
    <property type="component" value="Chromosome"/>
</dbReference>
<dbReference type="GO" id="GO:0005737">
    <property type="term" value="C:cytoplasm"/>
    <property type="evidence" value="ECO:0007669"/>
    <property type="project" value="UniProtKB-SubCell"/>
</dbReference>
<dbReference type="GO" id="GO:0005524">
    <property type="term" value="F:ATP binding"/>
    <property type="evidence" value="ECO:0007669"/>
    <property type="project" value="UniProtKB-UniRule"/>
</dbReference>
<dbReference type="GO" id="GO:0004821">
    <property type="term" value="F:histidine-tRNA ligase activity"/>
    <property type="evidence" value="ECO:0007669"/>
    <property type="project" value="UniProtKB-UniRule"/>
</dbReference>
<dbReference type="GO" id="GO:0006427">
    <property type="term" value="P:histidyl-tRNA aminoacylation"/>
    <property type="evidence" value="ECO:0007669"/>
    <property type="project" value="UniProtKB-UniRule"/>
</dbReference>
<dbReference type="CDD" id="cd00773">
    <property type="entry name" value="HisRS-like_core"/>
    <property type="match status" value="1"/>
</dbReference>
<dbReference type="CDD" id="cd00859">
    <property type="entry name" value="HisRS_anticodon"/>
    <property type="match status" value="1"/>
</dbReference>
<dbReference type="FunFam" id="3.30.930.10:FF:000005">
    <property type="entry name" value="Histidine--tRNA ligase"/>
    <property type="match status" value="1"/>
</dbReference>
<dbReference type="Gene3D" id="3.40.50.800">
    <property type="entry name" value="Anticodon-binding domain"/>
    <property type="match status" value="1"/>
</dbReference>
<dbReference type="Gene3D" id="3.30.930.10">
    <property type="entry name" value="Bira Bifunctional Protein, Domain 2"/>
    <property type="match status" value="1"/>
</dbReference>
<dbReference type="HAMAP" id="MF_00127">
    <property type="entry name" value="His_tRNA_synth"/>
    <property type="match status" value="1"/>
</dbReference>
<dbReference type="InterPro" id="IPR006195">
    <property type="entry name" value="aa-tRNA-synth_II"/>
</dbReference>
<dbReference type="InterPro" id="IPR045864">
    <property type="entry name" value="aa-tRNA-synth_II/BPL/LPL"/>
</dbReference>
<dbReference type="InterPro" id="IPR004154">
    <property type="entry name" value="Anticodon-bd"/>
</dbReference>
<dbReference type="InterPro" id="IPR036621">
    <property type="entry name" value="Anticodon-bd_dom_sf"/>
</dbReference>
<dbReference type="InterPro" id="IPR015807">
    <property type="entry name" value="His-tRNA-ligase"/>
</dbReference>
<dbReference type="InterPro" id="IPR041715">
    <property type="entry name" value="HisRS-like_core"/>
</dbReference>
<dbReference type="InterPro" id="IPR004516">
    <property type="entry name" value="HisRS/HisZ"/>
</dbReference>
<dbReference type="InterPro" id="IPR033656">
    <property type="entry name" value="HisRS_anticodon"/>
</dbReference>
<dbReference type="NCBIfam" id="TIGR00442">
    <property type="entry name" value="hisS"/>
    <property type="match status" value="1"/>
</dbReference>
<dbReference type="PANTHER" id="PTHR43707:SF1">
    <property type="entry name" value="HISTIDINE--TRNA LIGASE, MITOCHONDRIAL-RELATED"/>
    <property type="match status" value="1"/>
</dbReference>
<dbReference type="PANTHER" id="PTHR43707">
    <property type="entry name" value="HISTIDYL-TRNA SYNTHETASE"/>
    <property type="match status" value="1"/>
</dbReference>
<dbReference type="Pfam" id="PF03129">
    <property type="entry name" value="HGTP_anticodon"/>
    <property type="match status" value="1"/>
</dbReference>
<dbReference type="Pfam" id="PF13393">
    <property type="entry name" value="tRNA-synt_His"/>
    <property type="match status" value="1"/>
</dbReference>
<dbReference type="PIRSF" id="PIRSF001549">
    <property type="entry name" value="His-tRNA_synth"/>
    <property type="match status" value="1"/>
</dbReference>
<dbReference type="SUPFAM" id="SSF52954">
    <property type="entry name" value="Class II aaRS ABD-related"/>
    <property type="match status" value="1"/>
</dbReference>
<dbReference type="SUPFAM" id="SSF55681">
    <property type="entry name" value="Class II aaRS and biotin synthetases"/>
    <property type="match status" value="1"/>
</dbReference>
<dbReference type="PROSITE" id="PS50862">
    <property type="entry name" value="AA_TRNA_LIGASE_II"/>
    <property type="match status" value="1"/>
</dbReference>
<reference key="1">
    <citation type="submission" date="2007-10" db="EMBL/GenBank/DDBJ databases">
        <title>Complete sequence of Shewanella pealeana ATCC 700345.</title>
        <authorList>
            <consortium name="US DOE Joint Genome Institute"/>
            <person name="Copeland A."/>
            <person name="Lucas S."/>
            <person name="Lapidus A."/>
            <person name="Barry K."/>
            <person name="Glavina del Rio T."/>
            <person name="Dalin E."/>
            <person name="Tice H."/>
            <person name="Pitluck S."/>
            <person name="Chertkov O."/>
            <person name="Brettin T."/>
            <person name="Bruce D."/>
            <person name="Detter J.C."/>
            <person name="Han C."/>
            <person name="Schmutz J."/>
            <person name="Larimer F."/>
            <person name="Land M."/>
            <person name="Hauser L."/>
            <person name="Kyrpides N."/>
            <person name="Kim E."/>
            <person name="Zhao J.-S.Z."/>
            <person name="Manno D."/>
            <person name="Hawari J."/>
            <person name="Richardson P."/>
        </authorList>
    </citation>
    <scope>NUCLEOTIDE SEQUENCE [LARGE SCALE GENOMIC DNA]</scope>
    <source>
        <strain>ATCC 700345 / ANG-SQ1</strain>
    </source>
</reference>
<name>SYH_SHEPA</name>
<feature type="chain" id="PRO_1000076287" description="Histidine--tRNA ligase">
    <location>
        <begin position="1"/>
        <end position="424"/>
    </location>
</feature>
<keyword id="KW-0030">Aminoacyl-tRNA synthetase</keyword>
<keyword id="KW-0067">ATP-binding</keyword>
<keyword id="KW-0963">Cytoplasm</keyword>
<keyword id="KW-0436">Ligase</keyword>
<keyword id="KW-0547">Nucleotide-binding</keyword>
<keyword id="KW-0648">Protein biosynthesis</keyword>
<keyword id="KW-1185">Reference proteome</keyword>
<organism>
    <name type="scientific">Shewanella pealeana (strain ATCC 700345 / ANG-SQ1)</name>
    <dbReference type="NCBI Taxonomy" id="398579"/>
    <lineage>
        <taxon>Bacteria</taxon>
        <taxon>Pseudomonadati</taxon>
        <taxon>Pseudomonadota</taxon>
        <taxon>Gammaproteobacteria</taxon>
        <taxon>Alteromonadales</taxon>
        <taxon>Shewanellaceae</taxon>
        <taxon>Shewanella</taxon>
    </lineage>
</organism>
<gene>
    <name evidence="1" type="primary">hisS</name>
    <name type="ordered locus">Spea_1306</name>
</gene>
<sequence length="424" mass="47374">MAKQIQAIRGMNDILPTQSPLWQKLETVLRDTVGSYGYSEIRTPIVESTDLFKRSIGEVTDIVEKEMYTFEDRNGDSLTLRPEGTASTVRAGNEHGLLYNQEQRLWYMGPMFRHERPQKGRYRQFHQFGVEVYGIPTADIDAEVLMLSAKLWEKLGITEHVTLELNTLGDTEERAAYRDALIAFLEQHKEVLDEDSQRRMYSNPLRVLDSKNADVQALLADAPVLMDYFGEDTRSHFSHLCELLEAVGIQYTINPRLVRGLDYYNRTVFEWVTSSLGSQGTVLAGGRYDGLVGQLGGKPTPAVGFAMGLERIVLLLQTLELDKDIGPAVDVYVTAMGDNCKVEAIKIAQELRASLPTAKVMSHCGGGNFKKQMKRADKSGACVALVIGEDELANNQVAVKHLREDKAQELVARDALATYIAELI</sequence>